<reference key="1">
    <citation type="journal article" date="2003" name="Science">
        <title>Role of mobile DNA in the evolution of vancomycin-resistant Enterococcus faecalis.</title>
        <authorList>
            <person name="Paulsen I.T."/>
            <person name="Banerjei L."/>
            <person name="Myers G.S.A."/>
            <person name="Nelson K.E."/>
            <person name="Seshadri R."/>
            <person name="Read T.D."/>
            <person name="Fouts D.E."/>
            <person name="Eisen J.A."/>
            <person name="Gill S.R."/>
            <person name="Heidelberg J.F."/>
            <person name="Tettelin H."/>
            <person name="Dodson R.J."/>
            <person name="Umayam L.A."/>
            <person name="Brinkac L.M."/>
            <person name="Beanan M.J."/>
            <person name="Daugherty S.C."/>
            <person name="DeBoy R.T."/>
            <person name="Durkin S.A."/>
            <person name="Kolonay J.F."/>
            <person name="Madupu R."/>
            <person name="Nelson W.C."/>
            <person name="Vamathevan J.J."/>
            <person name="Tran B."/>
            <person name="Upton J."/>
            <person name="Hansen T."/>
            <person name="Shetty J."/>
            <person name="Khouri H.M."/>
            <person name="Utterback T.R."/>
            <person name="Radune D."/>
            <person name="Ketchum K.A."/>
            <person name="Dougherty B.A."/>
            <person name="Fraser C.M."/>
        </authorList>
    </citation>
    <scope>NUCLEOTIDE SEQUENCE [LARGE SCALE GENOMIC DNA]</scope>
    <source>
        <strain>ATCC 700802 / V583</strain>
    </source>
</reference>
<evidence type="ECO:0000255" key="1">
    <source>
        <dbReference type="HAMAP-Rule" id="MF_01719"/>
    </source>
</evidence>
<accession>Q832Y6</accession>
<comment type="function">
    <text evidence="1">Part of the ABC transporter complex MetNIQ involved in methionine import. Responsible for energy coupling to the transport system.</text>
</comment>
<comment type="catalytic activity">
    <reaction evidence="1">
        <text>L-methionine(out) + ATP + H2O = L-methionine(in) + ADP + phosphate + H(+)</text>
        <dbReference type="Rhea" id="RHEA:29779"/>
        <dbReference type="ChEBI" id="CHEBI:15377"/>
        <dbReference type="ChEBI" id="CHEBI:15378"/>
        <dbReference type="ChEBI" id="CHEBI:30616"/>
        <dbReference type="ChEBI" id="CHEBI:43474"/>
        <dbReference type="ChEBI" id="CHEBI:57844"/>
        <dbReference type="ChEBI" id="CHEBI:456216"/>
        <dbReference type="EC" id="7.4.2.11"/>
    </reaction>
</comment>
<comment type="catalytic activity">
    <reaction evidence="1">
        <text>D-methionine(out) + ATP + H2O = D-methionine(in) + ADP + phosphate + H(+)</text>
        <dbReference type="Rhea" id="RHEA:29767"/>
        <dbReference type="ChEBI" id="CHEBI:15377"/>
        <dbReference type="ChEBI" id="CHEBI:15378"/>
        <dbReference type="ChEBI" id="CHEBI:30616"/>
        <dbReference type="ChEBI" id="CHEBI:43474"/>
        <dbReference type="ChEBI" id="CHEBI:57932"/>
        <dbReference type="ChEBI" id="CHEBI:456216"/>
        <dbReference type="EC" id="7.4.2.11"/>
    </reaction>
</comment>
<comment type="subunit">
    <text evidence="1">The complex is composed of two ATP-binding proteins (MetN), two transmembrane proteins (MetI) and a solute-binding protein (MetQ).</text>
</comment>
<comment type="subcellular location">
    <subcellularLocation>
        <location evidence="1">Cell membrane</location>
        <topology evidence="1">Peripheral membrane protein</topology>
    </subcellularLocation>
</comment>
<comment type="similarity">
    <text evidence="1">Belongs to the ABC transporter superfamily. Methionine importer (TC 3.A.1.24) family.</text>
</comment>
<name>METN1_ENTFA</name>
<proteinExistence type="inferred from homology"/>
<keyword id="KW-0029">Amino-acid transport</keyword>
<keyword id="KW-0067">ATP-binding</keyword>
<keyword id="KW-1003">Cell membrane</keyword>
<keyword id="KW-0472">Membrane</keyword>
<keyword id="KW-0547">Nucleotide-binding</keyword>
<keyword id="KW-1185">Reference proteome</keyword>
<keyword id="KW-1278">Translocase</keyword>
<keyword id="KW-0813">Transport</keyword>
<sequence>MIELKNISVTFQQKKQEIQAVQDVSLTIDKGDIYGIVGYSGAGKSTLVRVINLLQRPTAGTVIINKENILTFSKKELRQQRKKIGMIFQHFNLMKERTIFSNIDFSLKYSGLSKSERRQKISHLLELVGLSEKRDAYPSQLSGGQKQRVAIARALANDPEILLCDEATSALDPKTTGQILALLKKLNQELNLTIVLITHEMQVVKEICNKVAVMENGCVVESNDIVSIFSQPQQPLTKDFIRTATHIDQALTTILEHPKLADLDKNQELIEFSYVGDQTNEPLIAQLYSQYQVYTNILYGNVEIVQNVPIGHLIVVLSGDEAQRQQALTYLAKQGVRTNVLKTYQQTKQKQNLQVI</sequence>
<protein>
    <recommendedName>
        <fullName evidence="1">Methionine import ATP-binding protein MetN 1</fullName>
        <ecNumber evidence="1">7.4.2.11</ecNumber>
    </recommendedName>
</protein>
<gene>
    <name evidence="1" type="primary">metN1</name>
    <name type="ordered locus">EF_2082</name>
</gene>
<organism>
    <name type="scientific">Enterococcus faecalis (strain ATCC 700802 / V583)</name>
    <dbReference type="NCBI Taxonomy" id="226185"/>
    <lineage>
        <taxon>Bacteria</taxon>
        <taxon>Bacillati</taxon>
        <taxon>Bacillota</taxon>
        <taxon>Bacilli</taxon>
        <taxon>Lactobacillales</taxon>
        <taxon>Enterococcaceae</taxon>
        <taxon>Enterococcus</taxon>
    </lineage>
</organism>
<feature type="chain" id="PRO_0000270292" description="Methionine import ATP-binding protein MetN 1">
    <location>
        <begin position="1"/>
        <end position="356"/>
    </location>
</feature>
<feature type="domain" description="ABC transporter" evidence="1">
    <location>
        <begin position="2"/>
        <end position="241"/>
    </location>
</feature>
<feature type="binding site" evidence="1">
    <location>
        <begin position="38"/>
        <end position="45"/>
    </location>
    <ligand>
        <name>ATP</name>
        <dbReference type="ChEBI" id="CHEBI:30616"/>
    </ligand>
</feature>
<dbReference type="EC" id="7.4.2.11" evidence="1"/>
<dbReference type="EMBL" id="AE016830">
    <property type="protein sequence ID" value="AAO81815.1"/>
    <property type="molecule type" value="Genomic_DNA"/>
</dbReference>
<dbReference type="RefSeq" id="NP_815745.1">
    <property type="nucleotide sequence ID" value="NC_004668.1"/>
</dbReference>
<dbReference type="RefSeq" id="WP_002356948.1">
    <property type="nucleotide sequence ID" value="NZ_KE136528.1"/>
</dbReference>
<dbReference type="SMR" id="Q832Y6"/>
<dbReference type="STRING" id="226185.EF_2082"/>
<dbReference type="EnsemblBacteria" id="AAO81815">
    <property type="protein sequence ID" value="AAO81815"/>
    <property type="gene ID" value="EF_2082"/>
</dbReference>
<dbReference type="KEGG" id="efa:EF2082"/>
<dbReference type="PATRIC" id="fig|226185.45.peg.1447"/>
<dbReference type="eggNOG" id="COG1135">
    <property type="taxonomic scope" value="Bacteria"/>
</dbReference>
<dbReference type="HOGENOM" id="CLU_000604_1_3_9"/>
<dbReference type="Proteomes" id="UP000001415">
    <property type="component" value="Chromosome"/>
</dbReference>
<dbReference type="GO" id="GO:0005886">
    <property type="term" value="C:plasma membrane"/>
    <property type="evidence" value="ECO:0007669"/>
    <property type="project" value="UniProtKB-SubCell"/>
</dbReference>
<dbReference type="GO" id="GO:0033232">
    <property type="term" value="F:ABC-type D-methionine transporter activity"/>
    <property type="evidence" value="ECO:0007669"/>
    <property type="project" value="UniProtKB-EC"/>
</dbReference>
<dbReference type="GO" id="GO:0005524">
    <property type="term" value="F:ATP binding"/>
    <property type="evidence" value="ECO:0007669"/>
    <property type="project" value="UniProtKB-KW"/>
</dbReference>
<dbReference type="GO" id="GO:0016887">
    <property type="term" value="F:ATP hydrolysis activity"/>
    <property type="evidence" value="ECO:0007669"/>
    <property type="project" value="InterPro"/>
</dbReference>
<dbReference type="CDD" id="cd03258">
    <property type="entry name" value="ABC_MetN_methionine_transporter"/>
    <property type="match status" value="1"/>
</dbReference>
<dbReference type="FunFam" id="3.40.50.300:FF:000056">
    <property type="entry name" value="Cell division ATP-binding protein FtsE"/>
    <property type="match status" value="1"/>
</dbReference>
<dbReference type="Gene3D" id="3.30.70.260">
    <property type="match status" value="1"/>
</dbReference>
<dbReference type="Gene3D" id="3.40.50.300">
    <property type="entry name" value="P-loop containing nucleotide triphosphate hydrolases"/>
    <property type="match status" value="1"/>
</dbReference>
<dbReference type="InterPro" id="IPR003593">
    <property type="entry name" value="AAA+_ATPase"/>
</dbReference>
<dbReference type="InterPro" id="IPR003439">
    <property type="entry name" value="ABC_transporter-like_ATP-bd"/>
</dbReference>
<dbReference type="InterPro" id="IPR017871">
    <property type="entry name" value="ABC_transporter-like_CS"/>
</dbReference>
<dbReference type="InterPro" id="IPR045865">
    <property type="entry name" value="ACT-like_dom_sf"/>
</dbReference>
<dbReference type="InterPro" id="IPR041701">
    <property type="entry name" value="MetN_ABC"/>
</dbReference>
<dbReference type="InterPro" id="IPR050086">
    <property type="entry name" value="MetN_ABC_transporter-like"/>
</dbReference>
<dbReference type="InterPro" id="IPR018449">
    <property type="entry name" value="NIL_domain"/>
</dbReference>
<dbReference type="InterPro" id="IPR027417">
    <property type="entry name" value="P-loop_NTPase"/>
</dbReference>
<dbReference type="PANTHER" id="PTHR43166">
    <property type="entry name" value="AMINO ACID IMPORT ATP-BINDING PROTEIN"/>
    <property type="match status" value="1"/>
</dbReference>
<dbReference type="PANTHER" id="PTHR43166:SF30">
    <property type="entry name" value="METHIONINE IMPORT ATP-BINDING PROTEIN METN"/>
    <property type="match status" value="1"/>
</dbReference>
<dbReference type="Pfam" id="PF00005">
    <property type="entry name" value="ABC_tran"/>
    <property type="match status" value="1"/>
</dbReference>
<dbReference type="Pfam" id="PF09383">
    <property type="entry name" value="NIL"/>
    <property type="match status" value="1"/>
</dbReference>
<dbReference type="SMART" id="SM00382">
    <property type="entry name" value="AAA"/>
    <property type="match status" value="1"/>
</dbReference>
<dbReference type="SMART" id="SM00930">
    <property type="entry name" value="NIL"/>
    <property type="match status" value="1"/>
</dbReference>
<dbReference type="SUPFAM" id="SSF55021">
    <property type="entry name" value="ACT-like"/>
    <property type="match status" value="1"/>
</dbReference>
<dbReference type="SUPFAM" id="SSF52540">
    <property type="entry name" value="P-loop containing nucleoside triphosphate hydrolases"/>
    <property type="match status" value="1"/>
</dbReference>
<dbReference type="PROSITE" id="PS00211">
    <property type="entry name" value="ABC_TRANSPORTER_1"/>
    <property type="match status" value="1"/>
</dbReference>
<dbReference type="PROSITE" id="PS50893">
    <property type="entry name" value="ABC_TRANSPORTER_2"/>
    <property type="match status" value="1"/>
</dbReference>
<dbReference type="PROSITE" id="PS51264">
    <property type="entry name" value="METN"/>
    <property type="match status" value="1"/>
</dbReference>